<comment type="function">
    <text>This protein may play a role in the biosynthesis of the prosthetic group of nitrogenase (FeMo cofactor).</text>
</comment>
<comment type="pathway">
    <text>Cofactor biosynthesis; Fe-Mo cofactor biosynthesis.</text>
</comment>
<comment type="similarity">
    <text evidence="3">Belongs to the NifD/NifK/NifE/NifN family.</text>
</comment>
<protein>
    <recommendedName>
        <fullName>Nitrogenase iron-molybdenum cofactor biosynthesis protein NifN</fullName>
    </recommendedName>
</protein>
<organism>
    <name type="scientific">Klebsiella pneumoniae</name>
    <dbReference type="NCBI Taxonomy" id="573"/>
    <lineage>
        <taxon>Bacteria</taxon>
        <taxon>Pseudomonadati</taxon>
        <taxon>Pseudomonadota</taxon>
        <taxon>Gammaproteobacteria</taxon>
        <taxon>Enterobacterales</taxon>
        <taxon>Enterobacteriaceae</taxon>
        <taxon>Klebsiella/Raoultella group</taxon>
        <taxon>Klebsiella</taxon>
        <taxon>Klebsiella pneumoniae complex</taxon>
    </lineage>
</organism>
<proteinExistence type="inferred from homology"/>
<sequence length="461" mass="50568">MADIFRTDKPLAVSPIKTGQPLGAILASLGIEHSIPLVHGAQGCSAFAKVFFIQHFHDPVPLQSTAMDPTSTIMGADGNIFTALDTLCQRNNPQAIVLLSTGLSEAQGSDISRVVRQFREEYPRHKGVAILTVNTPDFYGSMENGFSAVLESVIEQWVPPAPRPAQRNRRVNLLVSHLCSPGDIEWLRRCVEAFGLQPIILPDLAQSMDGHLAQGDFSPLTQGGTPLRQIEQMGQSLCSFAIGVSLHRASSLLAPRCRGEVIALPHLMTLERCDAFIHQLAKISGRAVPEWLERQRGQLQDAMIDCHMWLQGQRMAIAAEGDLLAAWCDFANSQGMQPGPLVAPTGHPSLRQLPVERVVPGDLEDLQTLLCAHPADLLVANSHARDLAEQFALPLVRAGFPLFDKLGEFRRVRQGYSGMRDTLFELANLIRERHHHLAHYRSPLRQNPESSLSTGGAYAAD</sequence>
<evidence type="ECO:0000255" key="1"/>
<evidence type="ECO:0000256" key="2">
    <source>
        <dbReference type="SAM" id="MobiDB-lite"/>
    </source>
</evidence>
<evidence type="ECO:0000305" key="3"/>
<name>NIFN_KLEPN</name>
<keyword id="KW-0479">Metal-binding</keyword>
<keyword id="KW-0535">Nitrogen fixation</keyword>
<dbReference type="EMBL" id="X07294">
    <property type="protein sequence ID" value="CAA30273.1"/>
    <property type="molecule type" value="Genomic_DNA"/>
</dbReference>
<dbReference type="EMBL" id="X13303">
    <property type="protein sequence ID" value="CAA31672.1"/>
    <property type="molecule type" value="Genomic_DNA"/>
</dbReference>
<dbReference type="EMBL" id="X12600">
    <property type="protein sequence ID" value="CAA31115.1"/>
    <property type="molecule type" value="Genomic_DNA"/>
</dbReference>
<dbReference type="PIR" id="S01840">
    <property type="entry name" value="S01840"/>
</dbReference>
<dbReference type="SMR" id="P08738"/>
<dbReference type="UniPathway" id="UPA00782"/>
<dbReference type="GO" id="GO:0046872">
    <property type="term" value="F:metal ion binding"/>
    <property type="evidence" value="ECO:0007669"/>
    <property type="project" value="UniProtKB-KW"/>
</dbReference>
<dbReference type="GO" id="GO:0016163">
    <property type="term" value="F:nitrogenase activity"/>
    <property type="evidence" value="ECO:0007669"/>
    <property type="project" value="InterPro"/>
</dbReference>
<dbReference type="GO" id="GO:0009399">
    <property type="term" value="P:nitrogen fixation"/>
    <property type="evidence" value="ECO:0007669"/>
    <property type="project" value="UniProtKB-KW"/>
</dbReference>
<dbReference type="GO" id="GO:0065003">
    <property type="term" value="P:protein-containing complex assembly"/>
    <property type="evidence" value="ECO:0007669"/>
    <property type="project" value="InterPro"/>
</dbReference>
<dbReference type="CDD" id="cd01966">
    <property type="entry name" value="Nitrogenase_NifN_1"/>
    <property type="match status" value="1"/>
</dbReference>
<dbReference type="Gene3D" id="6.10.250.1090">
    <property type="match status" value="1"/>
</dbReference>
<dbReference type="Gene3D" id="3.40.50.1980">
    <property type="entry name" value="Nitrogenase molybdenum iron protein domain"/>
    <property type="match status" value="3"/>
</dbReference>
<dbReference type="InterPro" id="IPR050152">
    <property type="entry name" value="ChlB/BchB/BchZ"/>
</dbReference>
<dbReference type="InterPro" id="IPR000510">
    <property type="entry name" value="Nase/OxRdtase_comp1"/>
</dbReference>
<dbReference type="InterPro" id="IPR000318">
    <property type="entry name" value="Nase_comp1_CS"/>
</dbReference>
<dbReference type="InterPro" id="IPR005975">
    <property type="entry name" value="Nase_Mo-Fe_CF"/>
</dbReference>
<dbReference type="NCBIfam" id="TIGR01285">
    <property type="entry name" value="nifN"/>
    <property type="match status" value="1"/>
</dbReference>
<dbReference type="PANTHER" id="PTHR33712">
    <property type="entry name" value="LIGHT-INDEPENDENT PROTOCHLOROPHYLLIDE REDUCTASE SUBUNIT B"/>
    <property type="match status" value="1"/>
</dbReference>
<dbReference type="PANTHER" id="PTHR33712:SF7">
    <property type="entry name" value="LIGHT-INDEPENDENT PROTOCHLOROPHYLLIDE REDUCTASE SUBUNIT B"/>
    <property type="match status" value="1"/>
</dbReference>
<dbReference type="Pfam" id="PF00148">
    <property type="entry name" value="Oxidored_nitro"/>
    <property type="match status" value="1"/>
</dbReference>
<dbReference type="SUPFAM" id="SSF53807">
    <property type="entry name" value="Helical backbone' metal receptor"/>
    <property type="match status" value="1"/>
</dbReference>
<dbReference type="PROSITE" id="PS00699">
    <property type="entry name" value="NITROGENASE_1_1"/>
    <property type="match status" value="1"/>
</dbReference>
<feature type="chain" id="PRO_0000153129" description="Nitrogenase iron-molybdenum cofactor biosynthesis protein NifN">
    <location>
        <begin position="1"/>
        <end position="461"/>
    </location>
</feature>
<feature type="region of interest" description="Disordered" evidence="2">
    <location>
        <begin position="441"/>
        <end position="461"/>
    </location>
</feature>
<feature type="compositionally biased region" description="Polar residues" evidence="2">
    <location>
        <begin position="444"/>
        <end position="454"/>
    </location>
</feature>
<feature type="binding site" evidence="1">
    <location>
        <position position="44"/>
    </location>
    <ligand>
        <name>[7Fe-Mo-9S-C-homocitryl] cluster</name>
        <dbReference type="ChEBI" id="CHEBI:30409"/>
        <note>cofactor</note>
    </ligand>
</feature>
<reference key="1">
    <citation type="journal article" date="1988" name="J. Mol. Biol.">
        <title>Nucleotide sequence of a 24,206-base-pair DNA fragment carrying the entire nitrogen fixation gene cluster of Klebsiella pneumoniae.</title>
        <authorList>
            <person name="Arnold W."/>
            <person name="Rump A."/>
            <person name="Klipp W."/>
            <person name="Priefer U.B."/>
            <person name="Puehler A."/>
        </authorList>
    </citation>
    <scope>NUCLEOTIDE SEQUENCE [GENOMIC DNA]</scope>
</reference>
<reference key="2">
    <citation type="journal article" date="1988" name="Nucleic Acids Res.">
        <title>Nucleotide sequence of the nifE and nifN genes from Klebsiella pneumoniae.</title>
        <authorList>
            <person name="Setterquist R.A."/>
            <person name="Brigle K.E."/>
            <person name="Beynon J."/>
            <person name="Cannon M."/>
            <person name="Ally A."/>
            <person name="Cannon F."/>
            <person name="Dean D.R."/>
        </authorList>
    </citation>
    <scope>NUCLEOTIDE SEQUENCE [GENOMIC DNA]</scope>
</reference>
<reference key="3">
    <citation type="journal article" date="1988" name="Nucleic Acids Res.">
        <title>The nucleotide sequence of the nifT, nifY, nifX and nifW genes of K. pneumoniae.</title>
        <authorList>
            <person name="Beynon J."/>
            <person name="Cannon M."/>
            <person name="Banan-Wollaston V."/>
            <person name="Ally A."/>
            <person name="Sutterquist R."/>
            <person name="Cannon F."/>
        </authorList>
    </citation>
    <scope>NUCLEOTIDE SEQUENCE [GENOMIC DNA] OF 455-461</scope>
</reference>
<accession>P08738</accession>
<gene>
    <name type="primary">nifN</name>
</gene>